<reference key="1">
    <citation type="submission" date="2008-02" db="EMBL/GenBank/DDBJ databases">
        <title>Complete sequence of Haemophilus somnus 2336.</title>
        <authorList>
            <consortium name="US DOE Joint Genome Institute"/>
            <person name="Siddaramappa S."/>
            <person name="Duncan A.J."/>
            <person name="Challacombe J.F."/>
            <person name="Rainey D."/>
            <person name="Gillaspy A.F."/>
            <person name="Carson M."/>
            <person name="Gipson J."/>
            <person name="Gipson M."/>
            <person name="Bruce D."/>
            <person name="Detter J.C."/>
            <person name="Han C.S."/>
            <person name="Land M."/>
            <person name="Tapia R."/>
            <person name="Thompson L.S."/>
            <person name="Orvis J."/>
            <person name="Zaitshik J."/>
            <person name="Barnes G."/>
            <person name="Brettin T.S."/>
            <person name="Dyer D.W."/>
            <person name="Inzana T.J."/>
        </authorList>
    </citation>
    <scope>NUCLEOTIDE SEQUENCE [LARGE SCALE GENOMIC DNA]</scope>
    <source>
        <strain>2336</strain>
    </source>
</reference>
<evidence type="ECO:0000255" key="1">
    <source>
        <dbReference type="HAMAP-Rule" id="MF_00503"/>
    </source>
</evidence>
<evidence type="ECO:0000305" key="2"/>
<organism>
    <name type="scientific">Histophilus somni (strain 2336)</name>
    <name type="common">Haemophilus somnus</name>
    <dbReference type="NCBI Taxonomy" id="228400"/>
    <lineage>
        <taxon>Bacteria</taxon>
        <taxon>Pseudomonadati</taxon>
        <taxon>Pseudomonadota</taxon>
        <taxon>Gammaproteobacteria</taxon>
        <taxon>Pasteurellales</taxon>
        <taxon>Pasteurellaceae</taxon>
        <taxon>Histophilus</taxon>
    </lineage>
</organism>
<gene>
    <name evidence="1" type="primary">rplI</name>
    <name type="ordered locus">HSM_0607</name>
</gene>
<keyword id="KW-0687">Ribonucleoprotein</keyword>
<keyword id="KW-0689">Ribosomal protein</keyword>
<keyword id="KW-0694">RNA-binding</keyword>
<keyword id="KW-0699">rRNA-binding</keyword>
<sequence length="149" mass="15928">MQVILLDKIAHLGNVGDQVSVKAGFARNFLIPQGKAVMATQANIEYFESRRAELERKAAEVLATAQARANQLAELATVTITSKAGDEGRLFGSITARDVAEAVTAAGVEIAKSEVRLSTGPLRTTGEHQVRFQLHGEVFATLNVVIVAE</sequence>
<dbReference type="EMBL" id="CP000947">
    <property type="protein sequence ID" value="ACA32260.1"/>
    <property type="molecule type" value="Genomic_DNA"/>
</dbReference>
<dbReference type="RefSeq" id="WP_011609589.1">
    <property type="nucleotide sequence ID" value="NC_010519.1"/>
</dbReference>
<dbReference type="SMR" id="B0US46"/>
<dbReference type="STRING" id="228400.HSM_0607"/>
<dbReference type="GeneID" id="31486889"/>
<dbReference type="KEGG" id="hsm:HSM_0607"/>
<dbReference type="HOGENOM" id="CLU_078938_4_1_6"/>
<dbReference type="GO" id="GO:1990904">
    <property type="term" value="C:ribonucleoprotein complex"/>
    <property type="evidence" value="ECO:0007669"/>
    <property type="project" value="UniProtKB-KW"/>
</dbReference>
<dbReference type="GO" id="GO:0005840">
    <property type="term" value="C:ribosome"/>
    <property type="evidence" value="ECO:0007669"/>
    <property type="project" value="UniProtKB-KW"/>
</dbReference>
<dbReference type="GO" id="GO:0019843">
    <property type="term" value="F:rRNA binding"/>
    <property type="evidence" value="ECO:0007669"/>
    <property type="project" value="UniProtKB-UniRule"/>
</dbReference>
<dbReference type="GO" id="GO:0003735">
    <property type="term" value="F:structural constituent of ribosome"/>
    <property type="evidence" value="ECO:0007669"/>
    <property type="project" value="InterPro"/>
</dbReference>
<dbReference type="GO" id="GO:0006412">
    <property type="term" value="P:translation"/>
    <property type="evidence" value="ECO:0007669"/>
    <property type="project" value="UniProtKB-UniRule"/>
</dbReference>
<dbReference type="FunFam" id="3.10.430.100:FF:000001">
    <property type="entry name" value="50S ribosomal protein L9"/>
    <property type="match status" value="1"/>
</dbReference>
<dbReference type="FunFam" id="3.40.5.10:FF:000001">
    <property type="entry name" value="50S ribosomal protein L9"/>
    <property type="match status" value="1"/>
</dbReference>
<dbReference type="Gene3D" id="3.10.430.100">
    <property type="entry name" value="Ribosomal protein L9, C-terminal domain"/>
    <property type="match status" value="1"/>
</dbReference>
<dbReference type="Gene3D" id="3.40.5.10">
    <property type="entry name" value="Ribosomal protein L9, N-terminal domain"/>
    <property type="match status" value="1"/>
</dbReference>
<dbReference type="HAMAP" id="MF_00503">
    <property type="entry name" value="Ribosomal_bL9"/>
    <property type="match status" value="1"/>
</dbReference>
<dbReference type="InterPro" id="IPR000244">
    <property type="entry name" value="Ribosomal_bL9"/>
</dbReference>
<dbReference type="InterPro" id="IPR009027">
    <property type="entry name" value="Ribosomal_bL9/RNase_H1_N"/>
</dbReference>
<dbReference type="InterPro" id="IPR020594">
    <property type="entry name" value="Ribosomal_bL9_bac/chp"/>
</dbReference>
<dbReference type="InterPro" id="IPR020069">
    <property type="entry name" value="Ribosomal_bL9_C"/>
</dbReference>
<dbReference type="InterPro" id="IPR036791">
    <property type="entry name" value="Ribosomal_bL9_C_sf"/>
</dbReference>
<dbReference type="InterPro" id="IPR020070">
    <property type="entry name" value="Ribosomal_bL9_N"/>
</dbReference>
<dbReference type="InterPro" id="IPR036935">
    <property type="entry name" value="Ribosomal_bL9_N_sf"/>
</dbReference>
<dbReference type="NCBIfam" id="TIGR00158">
    <property type="entry name" value="L9"/>
    <property type="match status" value="1"/>
</dbReference>
<dbReference type="PANTHER" id="PTHR21368">
    <property type="entry name" value="50S RIBOSOMAL PROTEIN L9"/>
    <property type="match status" value="1"/>
</dbReference>
<dbReference type="Pfam" id="PF03948">
    <property type="entry name" value="Ribosomal_L9_C"/>
    <property type="match status" value="1"/>
</dbReference>
<dbReference type="Pfam" id="PF01281">
    <property type="entry name" value="Ribosomal_L9_N"/>
    <property type="match status" value="1"/>
</dbReference>
<dbReference type="SUPFAM" id="SSF55658">
    <property type="entry name" value="L9 N-domain-like"/>
    <property type="match status" value="1"/>
</dbReference>
<dbReference type="SUPFAM" id="SSF55653">
    <property type="entry name" value="Ribosomal protein L9 C-domain"/>
    <property type="match status" value="1"/>
</dbReference>
<dbReference type="PROSITE" id="PS00651">
    <property type="entry name" value="RIBOSOMAL_L9"/>
    <property type="match status" value="1"/>
</dbReference>
<feature type="chain" id="PRO_1000081483" description="Large ribosomal subunit protein bL9">
    <location>
        <begin position="1"/>
        <end position="149"/>
    </location>
</feature>
<proteinExistence type="inferred from homology"/>
<comment type="function">
    <text evidence="1">Binds to the 23S rRNA.</text>
</comment>
<comment type="similarity">
    <text evidence="1">Belongs to the bacterial ribosomal protein bL9 family.</text>
</comment>
<accession>B0US46</accession>
<name>RL9_HISS2</name>
<protein>
    <recommendedName>
        <fullName evidence="1">Large ribosomal subunit protein bL9</fullName>
    </recommendedName>
    <alternativeName>
        <fullName evidence="2">50S ribosomal protein L9</fullName>
    </alternativeName>
</protein>